<feature type="signal peptide" evidence="1">
    <location>
        <begin position="1"/>
        <end position="22"/>
    </location>
</feature>
<feature type="chain" id="PRO_5000112888" description="Outer-membrane lipoprotein carrier protein">
    <location>
        <begin position="23"/>
        <end position="210"/>
    </location>
</feature>
<gene>
    <name evidence="1" type="primary">lolA</name>
    <name type="ordered locus">Csal_2435</name>
</gene>
<organism>
    <name type="scientific">Chromohalobacter salexigens (strain ATCC BAA-138 / DSM 3043 / CIP 106854 / NCIMB 13768 / 1H11)</name>
    <dbReference type="NCBI Taxonomy" id="290398"/>
    <lineage>
        <taxon>Bacteria</taxon>
        <taxon>Pseudomonadati</taxon>
        <taxon>Pseudomonadota</taxon>
        <taxon>Gammaproteobacteria</taxon>
        <taxon>Oceanospirillales</taxon>
        <taxon>Halomonadaceae</taxon>
        <taxon>Chromohalobacter</taxon>
    </lineage>
</organism>
<sequence>MRAFKWALAIGATLALPLTAQAQTGGAERLAALLESVTSYSADFDQQILDGGGQRLQEAEGHMWLSRPGKFHWEVEAPYRQVVVSDGDKVYLYDPDLEQVSVRPLDTRVTHTPALLLSGSADALTENYAVESRQGDDEETFTLTPKSPDTLFESLQLTFENERLEGLQMEDSTGQRTAIAFDDIEVNGDIDASRFTFEIPEGADVIREGG</sequence>
<reference key="1">
    <citation type="journal article" date="2011" name="Stand. Genomic Sci.">
        <title>Complete genome sequence of the halophilic and highly halotolerant Chromohalobacter salexigens type strain (1H11(T)).</title>
        <authorList>
            <person name="Copeland A."/>
            <person name="O'Connor K."/>
            <person name="Lucas S."/>
            <person name="Lapidus A."/>
            <person name="Berry K.W."/>
            <person name="Detter J.C."/>
            <person name="Del Rio T.G."/>
            <person name="Hammon N."/>
            <person name="Dalin E."/>
            <person name="Tice H."/>
            <person name="Pitluck S."/>
            <person name="Bruce D."/>
            <person name="Goodwin L."/>
            <person name="Han C."/>
            <person name="Tapia R."/>
            <person name="Saunders E."/>
            <person name="Schmutz J."/>
            <person name="Brettin T."/>
            <person name="Larimer F."/>
            <person name="Land M."/>
            <person name="Hauser L."/>
            <person name="Vargas C."/>
            <person name="Nieto J.J."/>
            <person name="Kyrpides N.C."/>
            <person name="Ivanova N."/>
            <person name="Goker M."/>
            <person name="Klenk H.P."/>
            <person name="Csonka L.N."/>
            <person name="Woyke T."/>
        </authorList>
    </citation>
    <scope>NUCLEOTIDE SEQUENCE [LARGE SCALE GENOMIC DNA]</scope>
    <source>
        <strain>ATCC BAA-138 / DSM 3043 / CIP 106854 / NCIMB 13768 / 1H11</strain>
    </source>
</reference>
<evidence type="ECO:0000255" key="1">
    <source>
        <dbReference type="HAMAP-Rule" id="MF_00240"/>
    </source>
</evidence>
<proteinExistence type="inferred from homology"/>
<dbReference type="EMBL" id="CP000285">
    <property type="protein sequence ID" value="ABE59782.1"/>
    <property type="molecule type" value="Genomic_DNA"/>
</dbReference>
<dbReference type="RefSeq" id="WP_011507728.1">
    <property type="nucleotide sequence ID" value="NC_007963.1"/>
</dbReference>
<dbReference type="SMR" id="Q1QUS6"/>
<dbReference type="STRING" id="290398.Csal_2435"/>
<dbReference type="GeneID" id="95335141"/>
<dbReference type="KEGG" id="csa:Csal_2435"/>
<dbReference type="eggNOG" id="COG2834">
    <property type="taxonomic scope" value="Bacteria"/>
</dbReference>
<dbReference type="HOGENOM" id="CLU_087560_0_0_6"/>
<dbReference type="OrthoDB" id="9787361at2"/>
<dbReference type="Proteomes" id="UP000000239">
    <property type="component" value="Chromosome"/>
</dbReference>
<dbReference type="GO" id="GO:0030288">
    <property type="term" value="C:outer membrane-bounded periplasmic space"/>
    <property type="evidence" value="ECO:0007669"/>
    <property type="project" value="TreeGrafter"/>
</dbReference>
<dbReference type="GO" id="GO:0044874">
    <property type="term" value="P:lipoprotein localization to outer membrane"/>
    <property type="evidence" value="ECO:0007669"/>
    <property type="project" value="UniProtKB-UniRule"/>
</dbReference>
<dbReference type="GO" id="GO:0042953">
    <property type="term" value="P:lipoprotein transport"/>
    <property type="evidence" value="ECO:0007669"/>
    <property type="project" value="InterPro"/>
</dbReference>
<dbReference type="CDD" id="cd16325">
    <property type="entry name" value="LolA"/>
    <property type="match status" value="1"/>
</dbReference>
<dbReference type="Gene3D" id="2.50.20.10">
    <property type="entry name" value="Lipoprotein localisation LolA/LolB/LppX"/>
    <property type="match status" value="1"/>
</dbReference>
<dbReference type="HAMAP" id="MF_00240">
    <property type="entry name" value="LolA"/>
    <property type="match status" value="1"/>
</dbReference>
<dbReference type="InterPro" id="IPR029046">
    <property type="entry name" value="LolA/LolB/LppX"/>
</dbReference>
<dbReference type="InterPro" id="IPR004564">
    <property type="entry name" value="OM_lipoprot_carrier_LolA-like"/>
</dbReference>
<dbReference type="InterPro" id="IPR018323">
    <property type="entry name" value="OM_lipoprot_carrier_LolA_Pbac"/>
</dbReference>
<dbReference type="NCBIfam" id="TIGR00547">
    <property type="entry name" value="lolA"/>
    <property type="match status" value="1"/>
</dbReference>
<dbReference type="PANTHER" id="PTHR35869">
    <property type="entry name" value="OUTER-MEMBRANE LIPOPROTEIN CARRIER PROTEIN"/>
    <property type="match status" value="1"/>
</dbReference>
<dbReference type="PANTHER" id="PTHR35869:SF1">
    <property type="entry name" value="OUTER-MEMBRANE LIPOPROTEIN CARRIER PROTEIN"/>
    <property type="match status" value="1"/>
</dbReference>
<dbReference type="Pfam" id="PF03548">
    <property type="entry name" value="LolA"/>
    <property type="match status" value="1"/>
</dbReference>
<dbReference type="SUPFAM" id="SSF89392">
    <property type="entry name" value="Prokaryotic lipoproteins and lipoprotein localization factors"/>
    <property type="match status" value="1"/>
</dbReference>
<protein>
    <recommendedName>
        <fullName evidence="1">Outer-membrane lipoprotein carrier protein</fullName>
    </recommendedName>
</protein>
<name>LOLA_CHRSD</name>
<accession>Q1QUS6</accession>
<comment type="function">
    <text evidence="1">Participates in the translocation of lipoproteins from the inner membrane to the outer membrane. Only forms a complex with a lipoprotein if the residue after the N-terminal Cys is not an aspartate (The Asp acts as a targeting signal to indicate that the lipoprotein should stay in the inner membrane).</text>
</comment>
<comment type="subunit">
    <text evidence="1">Monomer.</text>
</comment>
<comment type="subcellular location">
    <subcellularLocation>
        <location evidence="1">Periplasm</location>
    </subcellularLocation>
</comment>
<comment type="similarity">
    <text evidence="1">Belongs to the LolA family.</text>
</comment>
<keyword id="KW-0143">Chaperone</keyword>
<keyword id="KW-0574">Periplasm</keyword>
<keyword id="KW-0653">Protein transport</keyword>
<keyword id="KW-1185">Reference proteome</keyword>
<keyword id="KW-0732">Signal</keyword>
<keyword id="KW-0813">Transport</keyword>